<dbReference type="EC" id="4.2.1.10" evidence="1"/>
<dbReference type="EMBL" id="DS985225">
    <property type="protein sequence ID" value="EEY22398.1"/>
    <property type="molecule type" value="Genomic_DNA"/>
</dbReference>
<dbReference type="RefSeq" id="XP_003001463.1">
    <property type="nucleotide sequence ID" value="XM_003001417.1"/>
</dbReference>
<dbReference type="SMR" id="C9SU87"/>
<dbReference type="STRING" id="526221.C9SU87"/>
<dbReference type="GeneID" id="9529517"/>
<dbReference type="KEGG" id="val:VDBG_08508"/>
<dbReference type="eggNOG" id="ENOG502S1A9">
    <property type="taxonomic scope" value="Eukaryota"/>
</dbReference>
<dbReference type="HOGENOM" id="CLU_090968_1_0_1"/>
<dbReference type="OMA" id="AYTHYSY"/>
<dbReference type="OrthoDB" id="8191625at2759"/>
<dbReference type="UniPathway" id="UPA00088">
    <property type="reaction ID" value="UER00178"/>
</dbReference>
<dbReference type="Proteomes" id="UP000008698">
    <property type="component" value="Unassembled WGS sequence"/>
</dbReference>
<dbReference type="GO" id="GO:0003855">
    <property type="term" value="F:3-dehydroquinate dehydratase activity"/>
    <property type="evidence" value="ECO:0007669"/>
    <property type="project" value="UniProtKB-UniRule"/>
</dbReference>
<dbReference type="GO" id="GO:0046279">
    <property type="term" value="P:3,4-dihydroxybenzoate biosynthetic process"/>
    <property type="evidence" value="ECO:0007669"/>
    <property type="project" value="UniProtKB-UniRule"/>
</dbReference>
<dbReference type="GO" id="GO:0019631">
    <property type="term" value="P:quinate catabolic process"/>
    <property type="evidence" value="ECO:0007669"/>
    <property type="project" value="TreeGrafter"/>
</dbReference>
<dbReference type="CDD" id="cd00466">
    <property type="entry name" value="DHQase_II"/>
    <property type="match status" value="1"/>
</dbReference>
<dbReference type="Gene3D" id="3.40.50.9100">
    <property type="entry name" value="Dehydroquinase, class II"/>
    <property type="match status" value="1"/>
</dbReference>
<dbReference type="HAMAP" id="MF_00169">
    <property type="entry name" value="AroQ"/>
    <property type="match status" value="1"/>
</dbReference>
<dbReference type="InterPro" id="IPR001874">
    <property type="entry name" value="DHquinase_II"/>
</dbReference>
<dbReference type="InterPro" id="IPR018509">
    <property type="entry name" value="DHquinase_II_CS"/>
</dbReference>
<dbReference type="InterPro" id="IPR036441">
    <property type="entry name" value="DHquinase_II_sf"/>
</dbReference>
<dbReference type="NCBIfam" id="TIGR01088">
    <property type="entry name" value="aroQ"/>
    <property type="match status" value="1"/>
</dbReference>
<dbReference type="NCBIfam" id="NF003804">
    <property type="entry name" value="PRK05395.1-1"/>
    <property type="match status" value="1"/>
</dbReference>
<dbReference type="NCBIfam" id="NF003805">
    <property type="entry name" value="PRK05395.1-2"/>
    <property type="match status" value="1"/>
</dbReference>
<dbReference type="NCBIfam" id="NF003806">
    <property type="entry name" value="PRK05395.1-3"/>
    <property type="match status" value="1"/>
</dbReference>
<dbReference type="NCBIfam" id="NF003807">
    <property type="entry name" value="PRK05395.1-4"/>
    <property type="match status" value="1"/>
</dbReference>
<dbReference type="PANTHER" id="PTHR21272">
    <property type="entry name" value="CATABOLIC 3-DEHYDROQUINASE"/>
    <property type="match status" value="1"/>
</dbReference>
<dbReference type="PANTHER" id="PTHR21272:SF3">
    <property type="entry name" value="CATABOLIC 3-DEHYDROQUINASE"/>
    <property type="match status" value="1"/>
</dbReference>
<dbReference type="Pfam" id="PF01220">
    <property type="entry name" value="DHquinase_II"/>
    <property type="match status" value="1"/>
</dbReference>
<dbReference type="PIRSF" id="PIRSF001399">
    <property type="entry name" value="DHquinase_II"/>
    <property type="match status" value="1"/>
</dbReference>
<dbReference type="SUPFAM" id="SSF52304">
    <property type="entry name" value="Type II 3-dehydroquinate dehydratase"/>
    <property type="match status" value="1"/>
</dbReference>
<dbReference type="PROSITE" id="PS01029">
    <property type="entry name" value="DEHYDROQUINASE_II"/>
    <property type="match status" value="1"/>
</dbReference>
<keyword id="KW-0456">Lyase</keyword>
<keyword id="KW-0672">Quinate metabolism</keyword>
<keyword id="KW-1185">Reference proteome</keyword>
<name>3DHQ_VERA1</name>
<evidence type="ECO:0000255" key="1">
    <source>
        <dbReference type="HAMAP-Rule" id="MF_03136"/>
    </source>
</evidence>
<organism>
    <name type="scientific">Verticillium alfalfae (strain VaMs.102 / ATCC MYA-4576 / FGSC 10136)</name>
    <name type="common">Verticillium wilt of alfalfa</name>
    <name type="synonym">Verticillium albo-atrum</name>
    <dbReference type="NCBI Taxonomy" id="526221"/>
    <lineage>
        <taxon>Eukaryota</taxon>
        <taxon>Fungi</taxon>
        <taxon>Dikarya</taxon>
        <taxon>Ascomycota</taxon>
        <taxon>Pezizomycotina</taxon>
        <taxon>Sordariomycetes</taxon>
        <taxon>Hypocreomycetidae</taxon>
        <taxon>Glomerellales</taxon>
        <taxon>Plectosphaerellaceae</taxon>
        <taxon>Verticillium</taxon>
    </lineage>
</organism>
<comment type="function">
    <text evidence="1">Is involved in the catabolism of quinate. Allows the utilization of quinate as carbon source via the beta-ketoadipate pathway.</text>
</comment>
<comment type="catalytic activity">
    <reaction evidence="1">
        <text>3-dehydroquinate = 3-dehydroshikimate + H2O</text>
        <dbReference type="Rhea" id="RHEA:21096"/>
        <dbReference type="ChEBI" id="CHEBI:15377"/>
        <dbReference type="ChEBI" id="CHEBI:16630"/>
        <dbReference type="ChEBI" id="CHEBI:32364"/>
        <dbReference type="EC" id="4.2.1.10"/>
    </reaction>
</comment>
<comment type="pathway">
    <text evidence="1">Aromatic compound metabolism; 3,4-dihydroxybenzoate biosynthesis; 3,4-dihydroxybenzoate from 3-dehydroquinate: step 1/2.</text>
</comment>
<comment type="subunit">
    <text evidence="1">Homododecamer. Adopts a ring-like structure, composed of an arrangement of two hexameric rings stacked on top of one another.</text>
</comment>
<comment type="similarity">
    <text evidence="1">Belongs to the type-II 3-dehydroquinase family.</text>
</comment>
<accession>C9SU87</accession>
<protein>
    <recommendedName>
        <fullName evidence="1">Catabolic 3-dehydroquinase</fullName>
        <shortName evidence="1">cDHQase</shortName>
        <ecNumber evidence="1">4.2.1.10</ecNumber>
    </recommendedName>
    <alternativeName>
        <fullName evidence="1">3-dehydroquinate dehydratase</fullName>
    </alternativeName>
</protein>
<sequence>MAARILLINGPNLNLLGTREPSVYGSTTLADVVAQAKTQAASLNVHLEAFQSNHEGAIVDRIHEARGAVDAIVINPGAYTHTSVAIRDALLGVDIPFVETHISNVHAREEWRRHSYFSDKAVAVICGLGTYGYTAAIEFAARHMKMKDRV</sequence>
<reference key="1">
    <citation type="journal article" date="2011" name="PLoS Pathog.">
        <title>Comparative genomics yields insights into niche adaptation of plant vascular wilt pathogens.</title>
        <authorList>
            <person name="Klosterman S.J."/>
            <person name="Subbarao K.V."/>
            <person name="Kang S."/>
            <person name="Veronese P."/>
            <person name="Gold S.E."/>
            <person name="Thomma B.P.H.J."/>
            <person name="Chen Z."/>
            <person name="Henrissat B."/>
            <person name="Lee Y.-H."/>
            <person name="Park J."/>
            <person name="Garcia-Pedrajas M.D."/>
            <person name="Barbara D.J."/>
            <person name="Anchieta A."/>
            <person name="de Jonge R."/>
            <person name="Santhanam P."/>
            <person name="Maruthachalam K."/>
            <person name="Atallah Z."/>
            <person name="Amyotte S.G."/>
            <person name="Paz Z."/>
            <person name="Inderbitzin P."/>
            <person name="Hayes R.J."/>
            <person name="Heiman D.I."/>
            <person name="Young S."/>
            <person name="Zeng Q."/>
            <person name="Engels R."/>
            <person name="Galagan J."/>
            <person name="Cuomo C.A."/>
            <person name="Dobinson K.F."/>
            <person name="Ma L.-J."/>
        </authorList>
    </citation>
    <scope>NUCLEOTIDE SEQUENCE [LARGE SCALE GENOMIC DNA]</scope>
    <source>
        <strain>VaMs.102 / ATCC MYA-4576 / FGSC 10136</strain>
    </source>
</reference>
<feature type="chain" id="PRO_0000402381" description="Catabolic 3-dehydroquinase">
    <location>
        <begin position="1"/>
        <end position="150"/>
    </location>
</feature>
<feature type="active site" description="Proton acceptor" evidence="1">
    <location>
        <position position="24"/>
    </location>
</feature>
<feature type="active site" description="Proton donor" evidence="1">
    <location>
        <position position="101"/>
    </location>
</feature>
<feature type="binding site" evidence="1">
    <location>
        <position position="75"/>
    </location>
    <ligand>
        <name>substrate</name>
    </ligand>
</feature>
<feature type="binding site" evidence="1">
    <location>
        <position position="81"/>
    </location>
    <ligand>
        <name>substrate</name>
    </ligand>
</feature>
<feature type="binding site" evidence="1">
    <location>
        <position position="88"/>
    </location>
    <ligand>
        <name>substrate</name>
    </ligand>
</feature>
<feature type="binding site" evidence="1">
    <location>
        <begin position="102"/>
        <end position="103"/>
    </location>
    <ligand>
        <name>substrate</name>
    </ligand>
</feature>
<feature type="binding site" evidence="1">
    <location>
        <position position="112"/>
    </location>
    <ligand>
        <name>substrate</name>
    </ligand>
</feature>
<feature type="site" description="Transition state stabilizer" evidence="1">
    <location>
        <position position="19"/>
    </location>
</feature>
<proteinExistence type="inferred from homology"/>
<gene>
    <name evidence="1" type="primary">qutE</name>
    <name type="ORF">VDBG_08508</name>
</gene>